<proteinExistence type="inferred from homology"/>
<sequence>MSQAYDPSQEGAKMSYAKDMSYGDYLHMDALLATHHPQSDAHDEMLFIIQHQTSELWMRLVLHELRAARALLLAGGDFRPAFKMLTRVARIFDQLNSAWDVLRTMTPSDYTTFRNALGNSSGFQSHQYRLIEYMLGNRNTAMMKVHEHRPELHAMLAAELEQPSLYHVALRALAAKTGASFAPEVYRMDNPHSADAAVQAAWRQVYEDPAKYWDLYELGEKLVDLEDYFRRWRFNHVTTVERVIGFKRGTGGTSGVQYLRRMLEVELFPELWHLRGDL</sequence>
<reference key="1">
    <citation type="journal article" date="2004" name="Nature">
        <title>Genome sequence of Silicibacter pomeroyi reveals adaptations to the marine environment.</title>
        <authorList>
            <person name="Moran M.A."/>
            <person name="Buchan A."/>
            <person name="Gonzalez J.M."/>
            <person name="Heidelberg J.F."/>
            <person name="Whitman W.B."/>
            <person name="Kiene R.P."/>
            <person name="Henriksen J.R."/>
            <person name="King G.M."/>
            <person name="Belas R."/>
            <person name="Fuqua C."/>
            <person name="Brinkac L.M."/>
            <person name="Lewis M."/>
            <person name="Johri S."/>
            <person name="Weaver B."/>
            <person name="Pai G."/>
            <person name="Eisen J.A."/>
            <person name="Rahe E."/>
            <person name="Sheldon W.M."/>
            <person name="Ye W."/>
            <person name="Miller T.R."/>
            <person name="Carlton J."/>
            <person name="Rasko D.A."/>
            <person name="Paulsen I.T."/>
            <person name="Ren Q."/>
            <person name="Daugherty S.C."/>
            <person name="DeBoy R.T."/>
            <person name="Dodson R.J."/>
            <person name="Durkin A.S."/>
            <person name="Madupu R."/>
            <person name="Nelson W.C."/>
            <person name="Sullivan S.A."/>
            <person name="Rosovitz M.J."/>
            <person name="Haft D.H."/>
            <person name="Selengut J."/>
            <person name="Ward N."/>
        </authorList>
    </citation>
    <scope>NUCLEOTIDE SEQUENCE [LARGE SCALE GENOMIC DNA]</scope>
    <source>
        <strain>ATCC 700808 / DSM 15171 / DSS-3</strain>
    </source>
</reference>
<reference key="2">
    <citation type="journal article" date="2014" name="Stand. Genomic Sci.">
        <title>An updated genome annotation for the model marine bacterium Ruegeria pomeroyi DSS-3.</title>
        <authorList>
            <person name="Rivers A.R."/>
            <person name="Smith C.B."/>
            <person name="Moran M.A."/>
        </authorList>
    </citation>
    <scope>GENOME REANNOTATION</scope>
    <source>
        <strain>ATCC 700808 / DSM 15171 / DSS-3</strain>
    </source>
</reference>
<comment type="function">
    <text evidence="1">Heme-dependent dioxygenase that catalyzes the oxidative cleavage of the L-tryptophan (L-Trp) pyrrole ring and converts L-tryptophan to N-formyl-L-kynurenine. Catalyzes the oxidative cleavage of the indole moiety.</text>
</comment>
<comment type="catalytic activity">
    <reaction evidence="1">
        <text>L-tryptophan + O2 = N-formyl-L-kynurenine</text>
        <dbReference type="Rhea" id="RHEA:24536"/>
        <dbReference type="ChEBI" id="CHEBI:15379"/>
        <dbReference type="ChEBI" id="CHEBI:57912"/>
        <dbReference type="ChEBI" id="CHEBI:58629"/>
        <dbReference type="EC" id="1.13.11.11"/>
    </reaction>
</comment>
<comment type="cofactor">
    <cofactor evidence="1">
        <name>heme</name>
        <dbReference type="ChEBI" id="CHEBI:30413"/>
    </cofactor>
    <text evidence="1">Binds 1 heme group per subunit.</text>
</comment>
<comment type="pathway">
    <text evidence="1">Amino-acid degradation; L-tryptophan degradation via kynurenine pathway; L-kynurenine from L-tryptophan: step 1/2.</text>
</comment>
<comment type="subunit">
    <text evidence="1">Homotetramer.</text>
</comment>
<comment type="similarity">
    <text evidence="1">Belongs to the tryptophan 2,3-dioxygenase family.</text>
</comment>
<feature type="chain" id="PRO_0000360135" description="Tryptophan 2,3-dioxygenase">
    <location>
        <begin position="1"/>
        <end position="278"/>
    </location>
</feature>
<feature type="binding site" evidence="1">
    <location>
        <begin position="47"/>
        <end position="51"/>
    </location>
    <ligand>
        <name>substrate</name>
    </ligand>
</feature>
<feature type="binding site" evidence="1">
    <location>
        <position position="110"/>
    </location>
    <ligand>
        <name>substrate</name>
    </ligand>
</feature>
<feature type="binding site" evidence="1">
    <location>
        <position position="114"/>
    </location>
    <ligand>
        <name>substrate</name>
    </ligand>
</feature>
<feature type="binding site" description="axial binding residue" evidence="1">
    <location>
        <position position="236"/>
    </location>
    <ligand>
        <name>heme</name>
        <dbReference type="ChEBI" id="CHEBI:30413"/>
    </ligand>
    <ligandPart>
        <name>Fe</name>
        <dbReference type="ChEBI" id="CHEBI:18248"/>
    </ligandPart>
</feature>
<feature type="binding site" evidence="1">
    <location>
        <position position="250"/>
    </location>
    <ligand>
        <name>substrate</name>
    </ligand>
</feature>
<accession>Q5LKH2</accession>
<geneLocation type="plasmid">
    <name>megaplasmid Spo</name>
</geneLocation>
<organism>
    <name type="scientific">Ruegeria pomeroyi (strain ATCC 700808 / DSM 15171 / DSS-3)</name>
    <name type="common">Silicibacter pomeroyi</name>
    <dbReference type="NCBI Taxonomy" id="246200"/>
    <lineage>
        <taxon>Bacteria</taxon>
        <taxon>Pseudomonadati</taxon>
        <taxon>Pseudomonadota</taxon>
        <taxon>Alphaproteobacteria</taxon>
        <taxon>Rhodobacterales</taxon>
        <taxon>Roseobacteraceae</taxon>
        <taxon>Ruegeria</taxon>
    </lineage>
</organism>
<gene>
    <name evidence="1" type="primary">kynA</name>
    <name type="ordered locus">SPOA0409</name>
</gene>
<name>T23O_RUEPO</name>
<keyword id="KW-0223">Dioxygenase</keyword>
<keyword id="KW-0349">Heme</keyword>
<keyword id="KW-0408">Iron</keyword>
<keyword id="KW-0479">Metal-binding</keyword>
<keyword id="KW-0560">Oxidoreductase</keyword>
<keyword id="KW-0614">Plasmid</keyword>
<keyword id="KW-1185">Reference proteome</keyword>
<keyword id="KW-0823">Tryptophan catabolism</keyword>
<evidence type="ECO:0000255" key="1">
    <source>
        <dbReference type="HAMAP-Rule" id="MF_01972"/>
    </source>
</evidence>
<dbReference type="EC" id="1.13.11.11" evidence="1"/>
<dbReference type="EMBL" id="CP000032">
    <property type="protein sequence ID" value="AAV97540.1"/>
    <property type="molecule type" value="Genomic_DNA"/>
</dbReference>
<dbReference type="RefSeq" id="WP_011242186.1">
    <property type="nucleotide sequence ID" value="NC_006569.1"/>
</dbReference>
<dbReference type="SMR" id="Q5LKH2"/>
<dbReference type="PaxDb" id="246200-SPOA0409"/>
<dbReference type="KEGG" id="sil:SPOA0409"/>
<dbReference type="eggNOG" id="COG3483">
    <property type="taxonomic scope" value="Bacteria"/>
</dbReference>
<dbReference type="HOGENOM" id="CLU_063240_0_0_5"/>
<dbReference type="OrthoDB" id="9776847at2"/>
<dbReference type="UniPathway" id="UPA00333">
    <property type="reaction ID" value="UER00453"/>
</dbReference>
<dbReference type="Proteomes" id="UP000001023">
    <property type="component" value="Plasmid megaplasmid"/>
</dbReference>
<dbReference type="GO" id="GO:0020037">
    <property type="term" value="F:heme binding"/>
    <property type="evidence" value="ECO:0000250"/>
    <property type="project" value="UniProtKB"/>
</dbReference>
<dbReference type="GO" id="GO:0046872">
    <property type="term" value="F:metal ion binding"/>
    <property type="evidence" value="ECO:0007669"/>
    <property type="project" value="UniProtKB-KW"/>
</dbReference>
<dbReference type="GO" id="GO:0004833">
    <property type="term" value="F:tryptophan 2,3-dioxygenase activity"/>
    <property type="evidence" value="ECO:0000250"/>
    <property type="project" value="UniProtKB"/>
</dbReference>
<dbReference type="GO" id="GO:0019442">
    <property type="term" value="P:L-tryptophan catabolic process to acetyl-CoA"/>
    <property type="evidence" value="ECO:0007669"/>
    <property type="project" value="TreeGrafter"/>
</dbReference>
<dbReference type="GO" id="GO:0019441">
    <property type="term" value="P:L-tryptophan catabolic process to kynurenine"/>
    <property type="evidence" value="ECO:0000250"/>
    <property type="project" value="UniProtKB"/>
</dbReference>
<dbReference type="FunFam" id="1.20.58.480:FF:000001">
    <property type="entry name" value="Tryptophan 2,3-dioxygenase"/>
    <property type="match status" value="1"/>
</dbReference>
<dbReference type="Gene3D" id="1.20.58.480">
    <property type="match status" value="1"/>
</dbReference>
<dbReference type="HAMAP" id="MF_01972">
    <property type="entry name" value="T23O"/>
    <property type="match status" value="1"/>
</dbReference>
<dbReference type="InterPro" id="IPR037217">
    <property type="entry name" value="Trp/Indoleamine_2_3_dOase-like"/>
</dbReference>
<dbReference type="InterPro" id="IPR004981">
    <property type="entry name" value="Trp_2_3_dOase"/>
</dbReference>
<dbReference type="PANTHER" id="PTHR10138">
    <property type="entry name" value="TRYPTOPHAN 2,3-DIOXYGENASE"/>
    <property type="match status" value="1"/>
</dbReference>
<dbReference type="PANTHER" id="PTHR10138:SF0">
    <property type="entry name" value="TRYPTOPHAN 2,3-DIOXYGENASE"/>
    <property type="match status" value="1"/>
</dbReference>
<dbReference type="Pfam" id="PF03301">
    <property type="entry name" value="Trp_dioxygenase"/>
    <property type="match status" value="2"/>
</dbReference>
<dbReference type="SUPFAM" id="SSF140959">
    <property type="entry name" value="Indolic compounds 2,3-dioxygenase-like"/>
    <property type="match status" value="1"/>
</dbReference>
<protein>
    <recommendedName>
        <fullName evidence="1">Tryptophan 2,3-dioxygenase</fullName>
        <shortName evidence="1">TDO</shortName>
        <ecNumber evidence="1">1.13.11.11</ecNumber>
    </recommendedName>
    <alternativeName>
        <fullName evidence="1">Tryptamin 2,3-dioxygenase</fullName>
    </alternativeName>
    <alternativeName>
        <fullName evidence="1">Tryptophan oxygenase</fullName>
        <shortName evidence="1">TO</shortName>
        <shortName evidence="1">TRPO</shortName>
    </alternativeName>
    <alternativeName>
        <fullName evidence="1">Tryptophan pyrrolase</fullName>
    </alternativeName>
    <alternativeName>
        <fullName evidence="1">Tryptophanase</fullName>
    </alternativeName>
</protein>